<keyword id="KW-0175">Coiled coil</keyword>
<keyword id="KW-0507">mRNA processing</keyword>
<keyword id="KW-0508">mRNA splicing</keyword>
<keyword id="KW-0539">Nucleus</keyword>
<keyword id="KW-1185">Reference proteome</keyword>
<keyword id="KW-0747">Spliceosome</keyword>
<reference key="1">
    <citation type="journal article" date="2004" name="Nature">
        <title>Genome evolution in yeasts.</title>
        <authorList>
            <person name="Dujon B."/>
            <person name="Sherman D."/>
            <person name="Fischer G."/>
            <person name="Durrens P."/>
            <person name="Casaregola S."/>
            <person name="Lafontaine I."/>
            <person name="de Montigny J."/>
            <person name="Marck C."/>
            <person name="Neuveglise C."/>
            <person name="Talla E."/>
            <person name="Goffard N."/>
            <person name="Frangeul L."/>
            <person name="Aigle M."/>
            <person name="Anthouard V."/>
            <person name="Babour A."/>
            <person name="Barbe V."/>
            <person name="Barnay S."/>
            <person name="Blanchin S."/>
            <person name="Beckerich J.-M."/>
            <person name="Beyne E."/>
            <person name="Bleykasten C."/>
            <person name="Boisrame A."/>
            <person name="Boyer J."/>
            <person name="Cattolico L."/>
            <person name="Confanioleri F."/>
            <person name="de Daruvar A."/>
            <person name="Despons L."/>
            <person name="Fabre E."/>
            <person name="Fairhead C."/>
            <person name="Ferry-Dumazet H."/>
            <person name="Groppi A."/>
            <person name="Hantraye F."/>
            <person name="Hennequin C."/>
            <person name="Jauniaux N."/>
            <person name="Joyet P."/>
            <person name="Kachouri R."/>
            <person name="Kerrest A."/>
            <person name="Koszul R."/>
            <person name="Lemaire M."/>
            <person name="Lesur I."/>
            <person name="Ma L."/>
            <person name="Muller H."/>
            <person name="Nicaud J.-M."/>
            <person name="Nikolski M."/>
            <person name="Oztas S."/>
            <person name="Ozier-Kalogeropoulos O."/>
            <person name="Pellenz S."/>
            <person name="Potier S."/>
            <person name="Richard G.-F."/>
            <person name="Straub M.-L."/>
            <person name="Suleau A."/>
            <person name="Swennen D."/>
            <person name="Tekaia F."/>
            <person name="Wesolowski-Louvel M."/>
            <person name="Westhof E."/>
            <person name="Wirth B."/>
            <person name="Zeniou-Meyer M."/>
            <person name="Zivanovic Y."/>
            <person name="Bolotin-Fukuhara M."/>
            <person name="Thierry A."/>
            <person name="Bouchier C."/>
            <person name="Caudron B."/>
            <person name="Scarpelli C."/>
            <person name="Gaillardin C."/>
            <person name="Weissenbach J."/>
            <person name="Wincker P."/>
            <person name="Souciet J.-L."/>
        </authorList>
    </citation>
    <scope>NUCLEOTIDE SEQUENCE [LARGE SCALE GENOMIC DNA]</scope>
    <source>
        <strain>ATCC 8585 / CBS 2359 / DSM 70799 / NBRC 1267 / NRRL Y-1140 / WM37</strain>
    </source>
</reference>
<reference key="2">
    <citation type="journal article" date="2004" name="Proc. Natl. Acad. Sci. U.S.A.">
        <title>Evolution of the MAT locus and its Ho endonuclease in yeast species.</title>
        <authorList>
            <person name="Butler G."/>
            <person name="Kenny C."/>
            <person name="Fagan A."/>
            <person name="Kurischko C."/>
            <person name="Gaillardin C."/>
            <person name="Wolfe K.H."/>
        </authorList>
    </citation>
    <scope>NUCLEOTIDE SEQUENCE [GENOMIC DNA] OF 1-50</scope>
    <source>
        <strain>CBS 2549</strain>
    </source>
</reference>
<proteinExistence type="inferred from homology"/>
<organism>
    <name type="scientific">Kluyveromyces lactis (strain ATCC 8585 / CBS 2359 / DSM 70799 / NBRC 1267 / NRRL Y-1140 / WM37)</name>
    <name type="common">Yeast</name>
    <name type="synonym">Candida sphaerica</name>
    <dbReference type="NCBI Taxonomy" id="284590"/>
    <lineage>
        <taxon>Eukaryota</taxon>
        <taxon>Fungi</taxon>
        <taxon>Dikarya</taxon>
        <taxon>Ascomycota</taxon>
        <taxon>Saccharomycotina</taxon>
        <taxon>Saccharomycetes</taxon>
        <taxon>Saccharomycetales</taxon>
        <taxon>Saccharomycetaceae</taxon>
        <taxon>Kluyveromyces</taxon>
    </lineage>
</organism>
<feature type="chain" id="PRO_0000079591" description="Pre-mRNA-splicing factor CWC25">
    <location>
        <begin position="1"/>
        <end position="206"/>
    </location>
</feature>
<feature type="region of interest" description="Disordered" evidence="3">
    <location>
        <begin position="165"/>
        <end position="206"/>
    </location>
</feature>
<feature type="coiled-coil region" evidence="2">
    <location>
        <begin position="17"/>
        <end position="63"/>
    </location>
</feature>
<feature type="compositionally biased region" description="Low complexity" evidence="3">
    <location>
        <begin position="186"/>
        <end position="206"/>
    </location>
</feature>
<accession>Q6CUQ5</accession>
<accession>Q707Z1</accession>
<protein>
    <recommendedName>
        <fullName>Pre-mRNA-splicing factor CWC25</fullName>
    </recommendedName>
</protein>
<name>CWC25_KLULA</name>
<gene>
    <name type="primary">CWC25</name>
    <name type="ordered locus">KLLA0C03069g</name>
</gene>
<evidence type="ECO:0000250" key="1"/>
<evidence type="ECO:0000255" key="2"/>
<evidence type="ECO:0000256" key="3">
    <source>
        <dbReference type="SAM" id="MobiDB-lite"/>
    </source>
</evidence>
<evidence type="ECO:0000305" key="4"/>
<dbReference type="EMBL" id="CR382123">
    <property type="protein sequence ID" value="CAH01185.1"/>
    <property type="molecule type" value="Genomic_DNA"/>
</dbReference>
<dbReference type="EMBL" id="AJ617304">
    <property type="protein sequence ID" value="CAE84414.1"/>
    <property type="molecule type" value="Genomic_DNA"/>
</dbReference>
<dbReference type="RefSeq" id="XP_452334.1">
    <property type="nucleotide sequence ID" value="XM_452334.1"/>
</dbReference>
<dbReference type="SMR" id="Q6CUQ5"/>
<dbReference type="FunCoup" id="Q6CUQ5">
    <property type="interactions" value="75"/>
</dbReference>
<dbReference type="STRING" id="284590.Q6CUQ5"/>
<dbReference type="PaxDb" id="284590-Q6CUQ5"/>
<dbReference type="KEGG" id="kla:KLLA0_C03069g"/>
<dbReference type="eggNOG" id="KOG3869">
    <property type="taxonomic scope" value="Eukaryota"/>
</dbReference>
<dbReference type="HOGENOM" id="CLU_025093_3_1_1"/>
<dbReference type="InParanoid" id="Q6CUQ5"/>
<dbReference type="OMA" id="VWETEQQ"/>
<dbReference type="Proteomes" id="UP000000598">
    <property type="component" value="Chromosome C"/>
</dbReference>
<dbReference type="GO" id="GO:0005684">
    <property type="term" value="C:U2-type spliceosomal complex"/>
    <property type="evidence" value="ECO:0007669"/>
    <property type="project" value="TreeGrafter"/>
</dbReference>
<dbReference type="GO" id="GO:0000398">
    <property type="term" value="P:mRNA splicing, via spliceosome"/>
    <property type="evidence" value="ECO:0007669"/>
    <property type="project" value="TreeGrafter"/>
</dbReference>
<dbReference type="InterPro" id="IPR019339">
    <property type="entry name" value="CIR_N_dom"/>
</dbReference>
<dbReference type="InterPro" id="IPR022209">
    <property type="entry name" value="CWC25"/>
</dbReference>
<dbReference type="InterPro" id="IPR051376">
    <property type="entry name" value="CWC25_splicing_factor"/>
</dbReference>
<dbReference type="PANTHER" id="PTHR16196">
    <property type="entry name" value="CELL CYCLE CONTROL PROTEIN CWF25"/>
    <property type="match status" value="1"/>
</dbReference>
<dbReference type="PANTHER" id="PTHR16196:SF0">
    <property type="entry name" value="PRE-MRNA-SPLICING FACTOR CWC25 HOMOLOG"/>
    <property type="match status" value="1"/>
</dbReference>
<dbReference type="Pfam" id="PF10197">
    <property type="entry name" value="Cir_N"/>
    <property type="match status" value="1"/>
</dbReference>
<dbReference type="Pfam" id="PF12542">
    <property type="entry name" value="CWC25"/>
    <property type="match status" value="1"/>
</dbReference>
<dbReference type="SMART" id="SM01083">
    <property type="entry name" value="Cir_N"/>
    <property type="match status" value="1"/>
</dbReference>
<sequence length="206" mass="24207">MSDLNLLKSWNPKLVKNRKKVWEAQQQLVEENKKIKERQKEIEKERELDRYSSLIRDEDQKNVKRKTGLEWMYDNTSTALTENVDYLLGKKEITDTLLDLSGNNNKSEKSENQKQTIRKHYQGIEDVICSKTNHKNVDLSSDDPMAKFKAAKQAHLKTLKQNIQPTSHEYPVHKPLRGANSKRYDSGNGSRSNYKNSRYNNKYYRS</sequence>
<comment type="function">
    <text evidence="1">Involved in pre-mRNA splicing.</text>
</comment>
<comment type="subunit">
    <text evidence="1">Associated with the spliceosome.</text>
</comment>
<comment type="subcellular location">
    <subcellularLocation>
        <location evidence="1">Nucleus</location>
    </subcellularLocation>
</comment>
<comment type="similarity">
    <text evidence="4">Belongs to the CWC25 family.</text>
</comment>